<comment type="catalytic activity">
    <reaction evidence="1">
        <text>beta-D-fructose 1,6-bisphosphate + H2O = beta-D-fructose 6-phosphate + phosphate</text>
        <dbReference type="Rhea" id="RHEA:11064"/>
        <dbReference type="ChEBI" id="CHEBI:15377"/>
        <dbReference type="ChEBI" id="CHEBI:32966"/>
        <dbReference type="ChEBI" id="CHEBI:43474"/>
        <dbReference type="ChEBI" id="CHEBI:57634"/>
        <dbReference type="EC" id="3.1.3.11"/>
    </reaction>
</comment>
<comment type="cofactor">
    <cofactor evidence="1">
        <name>Mn(2+)</name>
        <dbReference type="ChEBI" id="CHEBI:29035"/>
    </cofactor>
</comment>
<comment type="pathway">
    <text evidence="1">Carbohydrate biosynthesis; gluconeogenesis.</text>
</comment>
<comment type="similarity">
    <text evidence="1">Belongs to the FBPase class 3 family.</text>
</comment>
<organism>
    <name type="scientific">Clostridium botulinum (strain 657 / Type Ba4)</name>
    <dbReference type="NCBI Taxonomy" id="515621"/>
    <lineage>
        <taxon>Bacteria</taxon>
        <taxon>Bacillati</taxon>
        <taxon>Bacillota</taxon>
        <taxon>Clostridia</taxon>
        <taxon>Eubacteriales</taxon>
        <taxon>Clostridiaceae</taxon>
        <taxon>Clostridium</taxon>
    </lineage>
</organism>
<proteinExistence type="inferred from homology"/>
<protein>
    <recommendedName>
        <fullName evidence="1">Fructose-1,6-bisphosphatase class 3</fullName>
        <shortName evidence="1">FBPase class 3</shortName>
        <ecNumber evidence="1">3.1.3.11</ecNumber>
    </recommendedName>
    <alternativeName>
        <fullName evidence="1">D-fructose-1,6-bisphosphate 1-phosphohydrolase class 3</fullName>
    </alternativeName>
</protein>
<name>F16PC_CLOB6</name>
<evidence type="ECO:0000255" key="1">
    <source>
        <dbReference type="HAMAP-Rule" id="MF_01854"/>
    </source>
</evidence>
<reference key="1">
    <citation type="submission" date="2008-05" db="EMBL/GenBank/DDBJ databases">
        <title>Genome sequence of Clostridium botulinum Ba4 strain 657.</title>
        <authorList>
            <person name="Shrivastava S."/>
            <person name="Brown J.L."/>
            <person name="Bruce D."/>
            <person name="Detter C."/>
            <person name="Munk C."/>
            <person name="Smith L.A."/>
            <person name="Smith T.J."/>
            <person name="Sutton G."/>
            <person name="Brettin T.S."/>
        </authorList>
    </citation>
    <scope>NUCLEOTIDE SEQUENCE [LARGE SCALE GENOMIC DNA]</scope>
    <source>
        <strain>657 / Type Ba4</strain>
    </source>
</reference>
<accession>C3L0R6</accession>
<gene>
    <name evidence="1" type="primary">fbp</name>
    <name type="ordered locus">CLJ_B0592</name>
</gene>
<feature type="chain" id="PRO_1000216145" description="Fructose-1,6-bisphosphatase class 3">
    <location>
        <begin position="1"/>
        <end position="668"/>
    </location>
</feature>
<sequence length="668" mass="77373">MTLYDENNLHIIKDNLRYLKLLSKQYPSISSASSEIINLQAILNLPKGTEHFISDVHGEYESFTHMLKNASGVIKRKIDDVFGTSLRECDKKNLATLIYYPEQKLDLIKKSEKNLEDWYKITLYRLIRLCQIVSSKYTRSKVRKSLPSDFAYIIEELLNEQGDRVDKQEYYNSIIETIIDIDRASEFIIAISNVIQRLVVDKLHIIGDIYDRGPGAEIIIEALSKHHSIDIQWGNHDIVWMGAAAGCEACIANVIRISLRYANLSTLEDGYGINLLPLATFAMDFYKEDNCENFKPRTIDKNLNETDIKLLSKMHKAISIIQFKLEGKIIKRRPEFKMEERLLLDKINIKEGTLNLNEKIYKLIDTNFPTLDKENPYELNERERDLVEKLTNSFINSEKLQRHIKFLYSNGSLYLKYNSNLLYHGCIPLNDDGSLKEVTLCKETLKGKSLLDKLDRLAREAYFFKKDPESKLYGMDMMWYLWCGPNSPLFGKKKMTTFERYFLDDKNTHKEEKNPYYKYRNNEKMCTMIFEEFELDADNSHIINGHIPVKTKEGENPIKANGKLLVIDGGFCKAYQPQTGIAGYTLIYNSYGLLLTSHEPFSSIHKAIVEGNDILSSTTILEHVSSRKRVLDTDSGEEIKKQIHDLEMLLVAYRKGLIKEENEANIRF</sequence>
<dbReference type="EC" id="3.1.3.11" evidence="1"/>
<dbReference type="EMBL" id="CP001083">
    <property type="protein sequence ID" value="ACQ55075.1"/>
    <property type="molecule type" value="Genomic_DNA"/>
</dbReference>
<dbReference type="RefSeq" id="WP_012721393.1">
    <property type="nucleotide sequence ID" value="NC_012658.1"/>
</dbReference>
<dbReference type="KEGG" id="cbi:CLJ_B0592"/>
<dbReference type="HOGENOM" id="CLU_028392_2_0_9"/>
<dbReference type="UniPathway" id="UPA00138"/>
<dbReference type="Proteomes" id="UP000002333">
    <property type="component" value="Chromosome"/>
</dbReference>
<dbReference type="GO" id="GO:0042132">
    <property type="term" value="F:fructose 1,6-bisphosphate 1-phosphatase activity"/>
    <property type="evidence" value="ECO:0007669"/>
    <property type="project" value="UniProtKB-UniRule"/>
</dbReference>
<dbReference type="GO" id="GO:0006094">
    <property type="term" value="P:gluconeogenesis"/>
    <property type="evidence" value="ECO:0007669"/>
    <property type="project" value="UniProtKB-UniRule"/>
</dbReference>
<dbReference type="Gene3D" id="3.60.21.10">
    <property type="match status" value="1"/>
</dbReference>
<dbReference type="HAMAP" id="MF_01854">
    <property type="entry name" value="FBPase_class3"/>
    <property type="match status" value="1"/>
</dbReference>
<dbReference type="InterPro" id="IPR009164">
    <property type="entry name" value="FBPtase_class3"/>
</dbReference>
<dbReference type="InterPro" id="IPR029052">
    <property type="entry name" value="Metallo-depent_PP-like"/>
</dbReference>
<dbReference type="Pfam" id="PF06874">
    <property type="entry name" value="FBPase_2"/>
    <property type="match status" value="1"/>
</dbReference>
<dbReference type="PIRSF" id="PIRSF000906">
    <property type="entry name" value="FBPtase_Bacill"/>
    <property type="match status" value="1"/>
</dbReference>
<dbReference type="SUPFAM" id="SSF56300">
    <property type="entry name" value="Metallo-dependent phosphatases"/>
    <property type="match status" value="1"/>
</dbReference>
<keyword id="KW-0119">Carbohydrate metabolism</keyword>
<keyword id="KW-0378">Hydrolase</keyword>
<keyword id="KW-0464">Manganese</keyword>